<gene>
    <name evidence="3" type="primary">RLP33</name>
    <name evidence="5" type="ordered locus">At3g05660</name>
    <name evidence="6" type="ORF">F18C1.7</name>
</gene>
<protein>
    <recommendedName>
        <fullName evidence="3">Receptor-like protein 33</fullName>
        <shortName evidence="3">AtRLP33</shortName>
    </recommendedName>
</protein>
<name>RLP33_ARATH</name>
<dbReference type="EMBL" id="AC011620">
    <property type="protein sequence ID" value="AAF26131.1"/>
    <property type="status" value="ALT_SEQ"/>
    <property type="molecule type" value="Genomic_DNA"/>
</dbReference>
<dbReference type="EMBL" id="CP002686">
    <property type="protein sequence ID" value="AEE74273.1"/>
    <property type="molecule type" value="Genomic_DNA"/>
</dbReference>
<dbReference type="RefSeq" id="NP_187217.2">
    <property type="nucleotide sequence ID" value="NM_111439.4"/>
</dbReference>
<dbReference type="SMR" id="F4J8G2"/>
<dbReference type="FunCoup" id="F4J8G2">
    <property type="interactions" value="51"/>
</dbReference>
<dbReference type="STRING" id="3702.F4J8G2"/>
<dbReference type="GlyCosmos" id="F4J8G2">
    <property type="glycosylation" value="18 sites, No reported glycans"/>
</dbReference>
<dbReference type="GlyGen" id="F4J8G2">
    <property type="glycosylation" value="18 sites"/>
</dbReference>
<dbReference type="iPTMnet" id="F4J8G2"/>
<dbReference type="PaxDb" id="3702-AT3G05660.1"/>
<dbReference type="EnsemblPlants" id="AT3G05660.1">
    <property type="protein sequence ID" value="AT3G05660.1"/>
    <property type="gene ID" value="AT3G05660"/>
</dbReference>
<dbReference type="GeneID" id="819733"/>
<dbReference type="Gramene" id="AT3G05660.1">
    <property type="protein sequence ID" value="AT3G05660.1"/>
    <property type="gene ID" value="AT3G05660"/>
</dbReference>
<dbReference type="KEGG" id="ath:AT3G05660"/>
<dbReference type="Araport" id="AT3G05660"/>
<dbReference type="TAIR" id="AT3G05660">
    <property type="gene designation" value="RLP33"/>
</dbReference>
<dbReference type="eggNOG" id="KOG0619">
    <property type="taxonomic scope" value="Eukaryota"/>
</dbReference>
<dbReference type="HOGENOM" id="CLU_000288_18_3_1"/>
<dbReference type="InParanoid" id="F4J8G2"/>
<dbReference type="OMA" id="WANNTEC"/>
<dbReference type="PRO" id="PR:F4J8G2"/>
<dbReference type="Proteomes" id="UP000006548">
    <property type="component" value="Chromosome 3"/>
</dbReference>
<dbReference type="ExpressionAtlas" id="F4J8G2">
    <property type="expression patterns" value="baseline and differential"/>
</dbReference>
<dbReference type="GO" id="GO:0005886">
    <property type="term" value="C:plasma membrane"/>
    <property type="evidence" value="ECO:0007669"/>
    <property type="project" value="UniProtKB-SubCell"/>
</dbReference>
<dbReference type="FunFam" id="3.80.10.10:FF:000041">
    <property type="entry name" value="LRR receptor-like serine/threonine-protein kinase ERECTA"/>
    <property type="match status" value="1"/>
</dbReference>
<dbReference type="FunFam" id="3.80.10.10:FF:000095">
    <property type="entry name" value="LRR receptor-like serine/threonine-protein kinase GSO1"/>
    <property type="match status" value="2"/>
</dbReference>
<dbReference type="FunFam" id="3.80.10.10:FF:000713">
    <property type="entry name" value="Receptor-like protein 48"/>
    <property type="match status" value="1"/>
</dbReference>
<dbReference type="Gene3D" id="3.80.10.10">
    <property type="entry name" value="Ribonuclease Inhibitor"/>
    <property type="match status" value="3"/>
</dbReference>
<dbReference type="InterPro" id="IPR001611">
    <property type="entry name" value="Leu-rich_rpt"/>
</dbReference>
<dbReference type="InterPro" id="IPR003591">
    <property type="entry name" value="Leu-rich_rpt_typical-subtyp"/>
</dbReference>
<dbReference type="InterPro" id="IPR032675">
    <property type="entry name" value="LRR_dom_sf"/>
</dbReference>
<dbReference type="InterPro" id="IPR013210">
    <property type="entry name" value="LRR_N_plant-typ"/>
</dbReference>
<dbReference type="InterPro" id="IPR055414">
    <property type="entry name" value="LRR_R13L4/SHOC2-like"/>
</dbReference>
<dbReference type="PANTHER" id="PTHR48065:SF75">
    <property type="entry name" value="LEUCINE-RICH REPEAT-CONTAINING N-TERMINAL PLANT-TYPE DOMAIN-CONTAINING PROTEIN"/>
    <property type="match status" value="1"/>
</dbReference>
<dbReference type="PANTHER" id="PTHR48065">
    <property type="entry name" value="OS10G0469600 PROTEIN"/>
    <property type="match status" value="1"/>
</dbReference>
<dbReference type="Pfam" id="PF00560">
    <property type="entry name" value="LRR_1"/>
    <property type="match status" value="5"/>
</dbReference>
<dbReference type="Pfam" id="PF23598">
    <property type="entry name" value="LRR_14"/>
    <property type="match status" value="1"/>
</dbReference>
<dbReference type="Pfam" id="PF13516">
    <property type="entry name" value="LRR_6"/>
    <property type="match status" value="1"/>
</dbReference>
<dbReference type="Pfam" id="PF13855">
    <property type="entry name" value="LRR_8"/>
    <property type="match status" value="1"/>
</dbReference>
<dbReference type="Pfam" id="PF08263">
    <property type="entry name" value="LRRNT_2"/>
    <property type="match status" value="1"/>
</dbReference>
<dbReference type="PRINTS" id="PR00019">
    <property type="entry name" value="LEURICHRPT"/>
</dbReference>
<dbReference type="SMART" id="SM00369">
    <property type="entry name" value="LRR_TYP"/>
    <property type="match status" value="9"/>
</dbReference>
<dbReference type="SUPFAM" id="SSF52058">
    <property type="entry name" value="L domain-like"/>
    <property type="match status" value="2"/>
</dbReference>
<reference key="1">
    <citation type="journal article" date="2000" name="Nature">
        <title>Sequence and analysis of chromosome 3 of the plant Arabidopsis thaliana.</title>
        <authorList>
            <person name="Salanoubat M."/>
            <person name="Lemcke K."/>
            <person name="Rieger M."/>
            <person name="Ansorge W."/>
            <person name="Unseld M."/>
            <person name="Fartmann B."/>
            <person name="Valle G."/>
            <person name="Bloecker H."/>
            <person name="Perez-Alonso M."/>
            <person name="Obermaier B."/>
            <person name="Delseny M."/>
            <person name="Boutry M."/>
            <person name="Grivell L.A."/>
            <person name="Mache R."/>
            <person name="Puigdomenech P."/>
            <person name="De Simone V."/>
            <person name="Choisne N."/>
            <person name="Artiguenave F."/>
            <person name="Robert C."/>
            <person name="Brottier P."/>
            <person name="Wincker P."/>
            <person name="Cattolico L."/>
            <person name="Weissenbach J."/>
            <person name="Saurin W."/>
            <person name="Quetier F."/>
            <person name="Schaefer M."/>
            <person name="Mueller-Auer S."/>
            <person name="Gabel C."/>
            <person name="Fuchs M."/>
            <person name="Benes V."/>
            <person name="Wurmbach E."/>
            <person name="Drzonek H."/>
            <person name="Erfle H."/>
            <person name="Jordan N."/>
            <person name="Bangert S."/>
            <person name="Wiedelmann R."/>
            <person name="Kranz H."/>
            <person name="Voss H."/>
            <person name="Holland R."/>
            <person name="Brandt P."/>
            <person name="Nyakatura G."/>
            <person name="Vezzi A."/>
            <person name="D'Angelo M."/>
            <person name="Pallavicini A."/>
            <person name="Toppo S."/>
            <person name="Simionati B."/>
            <person name="Conrad A."/>
            <person name="Hornischer K."/>
            <person name="Kauer G."/>
            <person name="Loehnert T.-H."/>
            <person name="Nordsiek G."/>
            <person name="Reichelt J."/>
            <person name="Scharfe M."/>
            <person name="Schoen O."/>
            <person name="Bargues M."/>
            <person name="Terol J."/>
            <person name="Climent J."/>
            <person name="Navarro P."/>
            <person name="Collado C."/>
            <person name="Perez-Perez A."/>
            <person name="Ottenwaelder B."/>
            <person name="Duchemin D."/>
            <person name="Cooke R."/>
            <person name="Laudie M."/>
            <person name="Berger-Llauro C."/>
            <person name="Purnelle B."/>
            <person name="Masuy D."/>
            <person name="de Haan M."/>
            <person name="Maarse A.C."/>
            <person name="Alcaraz J.-P."/>
            <person name="Cottet A."/>
            <person name="Casacuberta E."/>
            <person name="Monfort A."/>
            <person name="Argiriou A."/>
            <person name="Flores M."/>
            <person name="Liguori R."/>
            <person name="Vitale D."/>
            <person name="Mannhaupt G."/>
            <person name="Haase D."/>
            <person name="Schoof H."/>
            <person name="Rudd S."/>
            <person name="Zaccaria P."/>
            <person name="Mewes H.-W."/>
            <person name="Mayer K.F.X."/>
            <person name="Kaul S."/>
            <person name="Town C.D."/>
            <person name="Koo H.L."/>
            <person name="Tallon L.J."/>
            <person name="Jenkins J."/>
            <person name="Rooney T."/>
            <person name="Rizzo M."/>
            <person name="Walts A."/>
            <person name="Utterback T."/>
            <person name="Fujii C.Y."/>
            <person name="Shea T.P."/>
            <person name="Creasy T.H."/>
            <person name="Haas B."/>
            <person name="Maiti R."/>
            <person name="Wu D."/>
            <person name="Peterson J."/>
            <person name="Van Aken S."/>
            <person name="Pai G."/>
            <person name="Militscher J."/>
            <person name="Sellers P."/>
            <person name="Gill J.E."/>
            <person name="Feldblyum T.V."/>
            <person name="Preuss D."/>
            <person name="Lin X."/>
            <person name="Nierman W.C."/>
            <person name="Salzberg S.L."/>
            <person name="White O."/>
            <person name="Venter J.C."/>
            <person name="Fraser C.M."/>
            <person name="Kaneko T."/>
            <person name="Nakamura Y."/>
            <person name="Sato S."/>
            <person name="Kato T."/>
            <person name="Asamizu E."/>
            <person name="Sasamoto S."/>
            <person name="Kimura T."/>
            <person name="Idesawa K."/>
            <person name="Kawashima K."/>
            <person name="Kishida Y."/>
            <person name="Kiyokawa C."/>
            <person name="Kohara M."/>
            <person name="Matsumoto M."/>
            <person name="Matsuno A."/>
            <person name="Muraki A."/>
            <person name="Nakayama S."/>
            <person name="Nakazaki N."/>
            <person name="Shinpo S."/>
            <person name="Takeuchi C."/>
            <person name="Wada T."/>
            <person name="Watanabe A."/>
            <person name="Yamada M."/>
            <person name="Yasuda M."/>
            <person name="Tabata S."/>
        </authorList>
    </citation>
    <scope>NUCLEOTIDE SEQUENCE [LARGE SCALE GENOMIC DNA]</scope>
    <source>
        <strain>cv. Columbia</strain>
    </source>
</reference>
<reference key="2">
    <citation type="journal article" date="2017" name="Plant J.">
        <title>Araport11: a complete reannotation of the Arabidopsis thaliana reference genome.</title>
        <authorList>
            <person name="Cheng C.Y."/>
            <person name="Krishnakumar V."/>
            <person name="Chan A.P."/>
            <person name="Thibaud-Nissen F."/>
            <person name="Schobel S."/>
            <person name="Town C.D."/>
        </authorList>
    </citation>
    <scope>GENOME REANNOTATION</scope>
    <source>
        <strain>cv. Columbia</strain>
    </source>
</reference>
<reference key="3">
    <citation type="journal article" date="2005" name="Plant Physiol.">
        <title>Phylogenomic analysis of the receptor-like proteins of rice and Arabidopsis.</title>
        <authorList>
            <person name="Fritz-Laylin L.K."/>
            <person name="Krishnamurthy N."/>
            <person name="Toer M."/>
            <person name="Sjoelander K.V."/>
            <person name="Jones J.D."/>
        </authorList>
    </citation>
    <scope>GENE FAMILY</scope>
</reference>
<reference key="4">
    <citation type="journal article" date="2008" name="Plant Physiol.">
        <title>A genome-wide functional investigation into the roles of receptor-like proteins in Arabidopsis.</title>
        <authorList>
            <person name="Wang G."/>
            <person name="Ellendorff U."/>
            <person name="Kemp B."/>
            <person name="Mansfield J.W."/>
            <person name="Forsyth A."/>
            <person name="Mitchell K."/>
            <person name="Bastas K."/>
            <person name="Liu C.-M."/>
            <person name="Woods-Toer A."/>
            <person name="Zipfel C."/>
            <person name="de Wit P.J.G.M."/>
            <person name="Jones J.D.G."/>
            <person name="Toer M."/>
            <person name="Thomma B.P.H.J."/>
        </authorList>
    </citation>
    <scope>GENE FAMILY</scope>
    <scope>NOMENCLATURE</scope>
    <source>
        <strain>cv. Columbia</strain>
    </source>
</reference>
<feature type="signal peptide" evidence="1">
    <location>
        <begin position="1"/>
        <end position="23"/>
    </location>
</feature>
<feature type="chain" id="PRO_5003309729" description="Receptor-like protein 33">
    <location>
        <begin position="24"/>
        <end position="875"/>
    </location>
</feature>
<feature type="topological domain" description="Extracellular" evidence="1">
    <location>
        <begin position="24"/>
        <end position="822"/>
    </location>
</feature>
<feature type="transmembrane region" description="Helical" evidence="1">
    <location>
        <begin position="823"/>
        <end position="843"/>
    </location>
</feature>
<feature type="topological domain" description="Cytoplasmic" evidence="1">
    <location>
        <begin position="844"/>
        <end position="875"/>
    </location>
</feature>
<feature type="repeat" description="LRR 1" evidence="1">
    <location>
        <begin position="110"/>
        <end position="133"/>
    </location>
</feature>
<feature type="repeat" description="LRR 2" evidence="1">
    <location>
        <begin position="134"/>
        <end position="157"/>
    </location>
</feature>
<feature type="repeat" description="LRR 3" evidence="1">
    <location>
        <begin position="159"/>
        <end position="182"/>
    </location>
</feature>
<feature type="repeat" description="LRR 4" evidence="1">
    <location>
        <begin position="183"/>
        <end position="205"/>
    </location>
</feature>
<feature type="repeat" description="LRR 5" evidence="1">
    <location>
        <begin position="206"/>
        <end position="230"/>
    </location>
</feature>
<feature type="repeat" description="LRR 6" evidence="1">
    <location>
        <begin position="231"/>
        <end position="254"/>
    </location>
</feature>
<feature type="repeat" description="LRR 7" evidence="1">
    <location>
        <begin position="256"/>
        <end position="278"/>
    </location>
</feature>
<feature type="repeat" description="LRR 8" evidence="1">
    <location>
        <begin position="280"/>
        <end position="302"/>
    </location>
</feature>
<feature type="repeat" description="LRR 9" evidence="1">
    <location>
        <begin position="303"/>
        <end position="327"/>
    </location>
</feature>
<feature type="repeat" description="LRR 10" evidence="1">
    <location>
        <begin position="329"/>
        <end position="351"/>
    </location>
</feature>
<feature type="repeat" description="LRR 11; degenerate" evidence="4">
    <location>
        <begin position="352"/>
        <end position="377"/>
    </location>
</feature>
<feature type="repeat" description="LRR 12" evidence="1">
    <location>
        <begin position="378"/>
        <end position="401"/>
    </location>
</feature>
<feature type="repeat" description="LRR 13" evidence="1">
    <location>
        <begin position="404"/>
        <end position="427"/>
    </location>
</feature>
<feature type="repeat" description="LRR 14" evidence="1">
    <location>
        <begin position="428"/>
        <end position="451"/>
    </location>
</feature>
<feature type="repeat" description="LRR 15" evidence="1">
    <location>
        <begin position="455"/>
        <end position="477"/>
    </location>
</feature>
<feature type="repeat" description="LRR 16" evidence="1">
    <location>
        <begin position="479"/>
        <end position="502"/>
    </location>
</feature>
<feature type="repeat" description="LRR 17" evidence="1">
    <location>
        <begin position="503"/>
        <end position="528"/>
    </location>
</feature>
<feature type="repeat" description="LRR 18" evidence="1">
    <location>
        <begin position="530"/>
        <end position="549"/>
    </location>
</feature>
<feature type="repeat" description="LRR 19" evidence="1">
    <location>
        <begin position="550"/>
        <end position="573"/>
    </location>
</feature>
<feature type="repeat" description="LRR 20" evidence="1">
    <location>
        <begin position="575"/>
        <end position="596"/>
    </location>
</feature>
<feature type="repeat" description="LRR 21" evidence="1">
    <location>
        <begin position="597"/>
        <end position="619"/>
    </location>
</feature>
<feature type="repeat" description="LRR 22" evidence="1">
    <location>
        <begin position="620"/>
        <end position="643"/>
    </location>
</feature>
<feature type="repeat" description="LRR 23" evidence="1">
    <location>
        <begin position="686"/>
        <end position="710"/>
    </location>
</feature>
<feature type="repeat" description="LRR 24" evidence="1">
    <location>
        <begin position="711"/>
        <end position="734"/>
    </location>
</feature>
<feature type="repeat" description="LRR 25" evidence="1">
    <location>
        <begin position="735"/>
        <end position="758"/>
    </location>
</feature>
<feature type="repeat" description="LRR 26" evidence="1">
    <location>
        <begin position="760"/>
        <end position="783"/>
    </location>
</feature>
<feature type="glycosylation site" description="N-linked (GlcNAc...) asparagine" evidence="2">
    <location>
        <position position="65"/>
    </location>
</feature>
<feature type="glycosylation site" description="N-linked (GlcNAc...) asparagine" evidence="2">
    <location>
        <position position="103"/>
    </location>
</feature>
<feature type="glycosylation site" description="N-linked (GlcNAc...) asparagine" evidence="2">
    <location>
        <position position="133"/>
    </location>
</feature>
<feature type="glycosylation site" description="N-linked (GlcNAc...) asparagine" evidence="2">
    <location>
        <position position="146"/>
    </location>
</feature>
<feature type="glycosylation site" description="N-linked (GlcNAc...) asparagine" evidence="2">
    <location>
        <position position="181"/>
    </location>
</feature>
<feature type="glycosylation site" description="N-linked (GlcNAc...) asparagine" evidence="2">
    <location>
        <position position="229"/>
    </location>
</feature>
<feature type="glycosylation site" description="N-linked (GlcNAc...) asparagine" evidence="2">
    <location>
        <position position="250"/>
    </location>
</feature>
<feature type="glycosylation site" description="N-linked (GlcNAc...) asparagine" evidence="2">
    <location>
        <position position="299"/>
    </location>
</feature>
<feature type="glycosylation site" description="N-linked (GlcNAc...) asparagine" evidence="2">
    <location>
        <position position="364"/>
    </location>
</feature>
<feature type="glycosylation site" description="N-linked (GlcNAc...) asparagine" evidence="2">
    <location>
        <position position="395"/>
    </location>
</feature>
<feature type="glycosylation site" description="N-linked (GlcNAc...) asparagine" evidence="2">
    <location>
        <position position="411"/>
    </location>
</feature>
<feature type="glycosylation site" description="N-linked (GlcNAc...) asparagine" evidence="2">
    <location>
        <position position="490"/>
    </location>
</feature>
<feature type="glycosylation site" description="N-linked (GlcNAc...) asparagine" evidence="2">
    <location>
        <position position="514"/>
    </location>
</feature>
<feature type="glycosylation site" description="N-linked (GlcNAc...) asparagine" evidence="2">
    <location>
        <position position="587"/>
    </location>
</feature>
<feature type="glycosylation site" description="N-linked (GlcNAc...) asparagine" evidence="2">
    <location>
        <position position="633"/>
    </location>
</feature>
<feature type="glycosylation site" description="N-linked (GlcNAc...) asparagine" evidence="2">
    <location>
        <position position="717"/>
    </location>
</feature>
<feature type="glycosylation site" description="N-linked (GlcNAc...) asparagine" evidence="2">
    <location>
        <position position="757"/>
    </location>
</feature>
<feature type="glycosylation site" description="N-linked (GlcNAc...) asparagine" evidence="2">
    <location>
        <position position="765"/>
    </location>
</feature>
<organism>
    <name type="scientific">Arabidopsis thaliana</name>
    <name type="common">Mouse-ear cress</name>
    <dbReference type="NCBI Taxonomy" id="3702"/>
    <lineage>
        <taxon>Eukaryota</taxon>
        <taxon>Viridiplantae</taxon>
        <taxon>Streptophyta</taxon>
        <taxon>Embryophyta</taxon>
        <taxon>Tracheophyta</taxon>
        <taxon>Spermatophyta</taxon>
        <taxon>Magnoliopsida</taxon>
        <taxon>eudicotyledons</taxon>
        <taxon>Gunneridae</taxon>
        <taxon>Pentapetalae</taxon>
        <taxon>rosids</taxon>
        <taxon>malvids</taxon>
        <taxon>Brassicales</taxon>
        <taxon>Brassicaceae</taxon>
        <taxon>Camelineae</taxon>
        <taxon>Arabidopsis</taxon>
    </lineage>
</organism>
<keyword id="KW-1003">Cell membrane</keyword>
<keyword id="KW-0325">Glycoprotein</keyword>
<keyword id="KW-0433">Leucine-rich repeat</keyword>
<keyword id="KW-0472">Membrane</keyword>
<keyword id="KW-0675">Receptor</keyword>
<keyword id="KW-1185">Reference proteome</keyword>
<keyword id="KW-0677">Repeat</keyword>
<keyword id="KW-0732">Signal</keyword>
<keyword id="KW-0812">Transmembrane</keyword>
<keyword id="KW-1133">Transmembrane helix</keyword>
<evidence type="ECO:0000255" key="1"/>
<evidence type="ECO:0000255" key="2">
    <source>
        <dbReference type="PROSITE-ProRule" id="PRU00498"/>
    </source>
</evidence>
<evidence type="ECO:0000303" key="3">
    <source>
    </source>
</evidence>
<evidence type="ECO:0000305" key="4"/>
<evidence type="ECO:0000312" key="5">
    <source>
        <dbReference type="Araport" id="AT3G05660"/>
    </source>
</evidence>
<evidence type="ECO:0000312" key="6">
    <source>
        <dbReference type="EMBL" id="AAF26131.1"/>
    </source>
</evidence>
<accession>F4J8G2</accession>
<accession>Q9M9X1</accession>
<sequence>MSLIPITFYFLFLFFSNFRGVFAVPNIHLCHFEQRDALLEFKNEFKIKKPCFGCPSPLKTKSWENGSDCCHWDGITCDAKTGEVIEIDLMCSCLHGWFHSNSNLSMLQNFHFLTTLDLSYNHLSGQISSSIGNLSHLTTLDLSGNNFSGWIPSSLGNLFHLTSLHLYDNNFGGEIPSSLGNLSYLTFLDLSTNNFVGEIPSSFGSLNQLSILRLDNNKLSGNLPLEVINLTKLSEISLSHNQFTGTLPPNITSLSILESFSASGNNFVGTIPSSLFTIPSITLIFLDNNQLSGTLEFGNISSPSNLLVLQLGGNNLRGPIPTSISRLVNLRTLDLSHFNIQGQVDFNIFSHLKLLGNLYLSHSNTTTTIDLNAVLSCFKMLISLDLSGNHVLVTNKSSVSDPPLGLIGSLNLSGCGITEFPDILRTQRQMRTLDISNNKIKGQVPSWLLLQLEYMHISNNNFIGFERSTKLEKTVVPKPSMKHFFGSNNNFSGKIPSFICSLRSLIILDLSNNNFSGAIPPCVGKFKSTLSDLNLRRNRLSGSLPKTIIKSLRSLDVSHNELEGKLPRSLIHFSTLEVLNVESNRINDTFPFWLSSLKKLQVLVLRSNAFHGRIHKTRFPKLRIIDISRNHFNGTLPSDCFVEWTGMHSLEKNEDRFNEKYMGSGYYHDSMVLMNKGLEMELVRILKIYTALDFSGNKFEGEIPRSIGLLKELHILNLSSNGFTGHIPSSMGNLRELESLDVSRNKLSGEIPQELGNLSYLAYMNFSHNQLVGQVPGGTQFRTQSASSFEENLGLCGRPLEECRVVHEPTPSGESETLESEQVLSWIAAAIGFTPGIVLGLTIGHIVLSSKPRWFFKVLYINNSRRRRRTRSEKS</sequence>
<comment type="subcellular location">
    <subcellularLocation>
        <location evidence="4">Cell membrane</location>
        <topology evidence="4">Single-pass type I membrane protein</topology>
    </subcellularLocation>
</comment>
<comment type="similarity">
    <text evidence="4">Belongs to the RLP family.</text>
</comment>
<comment type="sequence caution" evidence="4">
    <conflict type="erroneous gene model prediction">
        <sequence resource="EMBL-CDS" id="AAF26131"/>
    </conflict>
</comment>
<proteinExistence type="inferred from homology"/>